<accession>Q2YQU9</accession>
<dbReference type="EC" id="4.1.1.23" evidence="1"/>
<dbReference type="EMBL" id="AM040264">
    <property type="protein sequence ID" value="CAJ12088.1"/>
    <property type="molecule type" value="Genomic_DNA"/>
</dbReference>
<dbReference type="RefSeq" id="WP_002965193.1">
    <property type="nucleotide sequence ID" value="NZ_KN046823.1"/>
</dbReference>
<dbReference type="SMR" id="Q2YQU9"/>
<dbReference type="STRING" id="359391.BAB1_2132"/>
<dbReference type="GeneID" id="93017565"/>
<dbReference type="KEGG" id="bmf:BAB1_2132"/>
<dbReference type="PATRIC" id="fig|359391.11.peg.1365"/>
<dbReference type="HOGENOM" id="CLU_067069_1_0_5"/>
<dbReference type="PhylomeDB" id="Q2YQU9"/>
<dbReference type="UniPathway" id="UPA00070">
    <property type="reaction ID" value="UER00120"/>
</dbReference>
<dbReference type="Proteomes" id="UP000002719">
    <property type="component" value="Chromosome I"/>
</dbReference>
<dbReference type="GO" id="GO:0005829">
    <property type="term" value="C:cytosol"/>
    <property type="evidence" value="ECO:0007669"/>
    <property type="project" value="TreeGrafter"/>
</dbReference>
<dbReference type="GO" id="GO:0004590">
    <property type="term" value="F:orotidine-5'-phosphate decarboxylase activity"/>
    <property type="evidence" value="ECO:0007669"/>
    <property type="project" value="UniProtKB-UniRule"/>
</dbReference>
<dbReference type="GO" id="GO:0006207">
    <property type="term" value="P:'de novo' pyrimidine nucleobase biosynthetic process"/>
    <property type="evidence" value="ECO:0007669"/>
    <property type="project" value="InterPro"/>
</dbReference>
<dbReference type="GO" id="GO:0044205">
    <property type="term" value="P:'de novo' UMP biosynthetic process"/>
    <property type="evidence" value="ECO:0007669"/>
    <property type="project" value="UniProtKB-UniRule"/>
</dbReference>
<dbReference type="CDD" id="cd04725">
    <property type="entry name" value="OMP_decarboxylase_like"/>
    <property type="match status" value="1"/>
</dbReference>
<dbReference type="Gene3D" id="3.20.20.70">
    <property type="entry name" value="Aldolase class I"/>
    <property type="match status" value="1"/>
</dbReference>
<dbReference type="HAMAP" id="MF_01200_B">
    <property type="entry name" value="OMPdecase_type1_B"/>
    <property type="match status" value="1"/>
</dbReference>
<dbReference type="InterPro" id="IPR013785">
    <property type="entry name" value="Aldolase_TIM"/>
</dbReference>
<dbReference type="InterPro" id="IPR014732">
    <property type="entry name" value="OMPdecase"/>
</dbReference>
<dbReference type="InterPro" id="IPR018089">
    <property type="entry name" value="OMPdecase_AS"/>
</dbReference>
<dbReference type="InterPro" id="IPR047596">
    <property type="entry name" value="OMPdecase_bac"/>
</dbReference>
<dbReference type="InterPro" id="IPR001754">
    <property type="entry name" value="OMPdeCOase_dom"/>
</dbReference>
<dbReference type="InterPro" id="IPR011060">
    <property type="entry name" value="RibuloseP-bd_barrel"/>
</dbReference>
<dbReference type="NCBIfam" id="NF001273">
    <property type="entry name" value="PRK00230.1"/>
    <property type="match status" value="1"/>
</dbReference>
<dbReference type="NCBIfam" id="TIGR01740">
    <property type="entry name" value="pyrF"/>
    <property type="match status" value="1"/>
</dbReference>
<dbReference type="PANTHER" id="PTHR32119">
    <property type="entry name" value="OROTIDINE 5'-PHOSPHATE DECARBOXYLASE"/>
    <property type="match status" value="1"/>
</dbReference>
<dbReference type="PANTHER" id="PTHR32119:SF2">
    <property type="entry name" value="OROTIDINE 5'-PHOSPHATE DECARBOXYLASE"/>
    <property type="match status" value="1"/>
</dbReference>
<dbReference type="Pfam" id="PF00215">
    <property type="entry name" value="OMPdecase"/>
    <property type="match status" value="1"/>
</dbReference>
<dbReference type="SMART" id="SM00934">
    <property type="entry name" value="OMPdecase"/>
    <property type="match status" value="1"/>
</dbReference>
<dbReference type="SUPFAM" id="SSF51366">
    <property type="entry name" value="Ribulose-phoshate binding barrel"/>
    <property type="match status" value="1"/>
</dbReference>
<dbReference type="PROSITE" id="PS00156">
    <property type="entry name" value="OMPDECASE"/>
    <property type="match status" value="1"/>
</dbReference>
<evidence type="ECO:0000255" key="1">
    <source>
        <dbReference type="HAMAP-Rule" id="MF_01200"/>
    </source>
</evidence>
<feature type="chain" id="PRO_0000241850" description="Orotidine 5'-phosphate decarboxylase">
    <location>
        <begin position="1"/>
        <end position="238"/>
    </location>
</feature>
<feature type="active site" description="Proton donor" evidence="1">
    <location>
        <position position="69"/>
    </location>
</feature>
<feature type="binding site" evidence="1">
    <location>
        <position position="18"/>
    </location>
    <ligand>
        <name>substrate</name>
    </ligand>
</feature>
<feature type="binding site" evidence="1">
    <location>
        <position position="40"/>
    </location>
    <ligand>
        <name>substrate</name>
    </ligand>
</feature>
<feature type="binding site" evidence="1">
    <location>
        <begin position="67"/>
        <end position="76"/>
    </location>
    <ligand>
        <name>substrate</name>
    </ligand>
</feature>
<feature type="binding site" evidence="1">
    <location>
        <position position="122"/>
    </location>
    <ligand>
        <name>substrate</name>
    </ligand>
</feature>
<feature type="binding site" evidence="1">
    <location>
        <position position="183"/>
    </location>
    <ligand>
        <name>substrate</name>
    </ligand>
</feature>
<feature type="binding site" evidence="1">
    <location>
        <position position="192"/>
    </location>
    <ligand>
        <name>substrate</name>
    </ligand>
</feature>
<feature type="binding site" evidence="1">
    <location>
        <position position="213"/>
    </location>
    <ligand>
        <name>substrate</name>
    </ligand>
</feature>
<sequence length="238" mass="25193">MTTELHDDASGRLIVGLDVPTIAEAEKVVEELGNAVSFYKIGYQLVFAGGLDFAKSLVAARKKVFLDMKLLDIDNTIAKGVENVAKMGVSMLTLHAYPKAMRAAVEAARGSDLCLLGVTVLTSMDNADLREAGYFDNAETLVLKRARQAHEAGMGGIVASAVEAQAIRQAVRPDMAIVTPGIRPAGSEKGDQKRVMTPADALRAGASHLIVARPIVGAPDRKAAALAILKEMRSIGRS</sequence>
<proteinExistence type="inferred from homology"/>
<protein>
    <recommendedName>
        <fullName evidence="1">Orotidine 5'-phosphate decarboxylase</fullName>
        <ecNumber evidence="1">4.1.1.23</ecNumber>
    </recommendedName>
    <alternativeName>
        <fullName evidence="1">OMP decarboxylase</fullName>
        <shortName evidence="1">OMPDCase</shortName>
        <shortName evidence="1">OMPdecase</shortName>
    </alternativeName>
</protein>
<name>PYRF_BRUA2</name>
<reference key="1">
    <citation type="journal article" date="2005" name="Infect. Immun.">
        <title>Whole-genome analyses of speciation events in pathogenic Brucellae.</title>
        <authorList>
            <person name="Chain P.S."/>
            <person name="Comerci D.J."/>
            <person name="Tolmasky M.E."/>
            <person name="Larimer F.W."/>
            <person name="Malfatti S.A."/>
            <person name="Vergez L.M."/>
            <person name="Aguero F."/>
            <person name="Land M.L."/>
            <person name="Ugalde R.A."/>
            <person name="Garcia E."/>
        </authorList>
    </citation>
    <scope>NUCLEOTIDE SEQUENCE [LARGE SCALE GENOMIC DNA]</scope>
    <source>
        <strain>2308</strain>
    </source>
</reference>
<gene>
    <name evidence="1" type="primary">pyrF</name>
    <name type="ordered locus">BAB1_2132</name>
</gene>
<keyword id="KW-0210">Decarboxylase</keyword>
<keyword id="KW-0456">Lyase</keyword>
<keyword id="KW-0665">Pyrimidine biosynthesis</keyword>
<keyword id="KW-1185">Reference proteome</keyword>
<comment type="function">
    <text evidence="1">Catalyzes the decarboxylation of orotidine 5'-monophosphate (OMP) to uridine 5'-monophosphate (UMP).</text>
</comment>
<comment type="catalytic activity">
    <reaction evidence="1">
        <text>orotidine 5'-phosphate + H(+) = UMP + CO2</text>
        <dbReference type="Rhea" id="RHEA:11596"/>
        <dbReference type="ChEBI" id="CHEBI:15378"/>
        <dbReference type="ChEBI" id="CHEBI:16526"/>
        <dbReference type="ChEBI" id="CHEBI:57538"/>
        <dbReference type="ChEBI" id="CHEBI:57865"/>
        <dbReference type="EC" id="4.1.1.23"/>
    </reaction>
</comment>
<comment type="pathway">
    <text evidence="1">Pyrimidine metabolism; UMP biosynthesis via de novo pathway; UMP from orotate: step 2/2.</text>
</comment>
<comment type="subunit">
    <text evidence="1">Homodimer.</text>
</comment>
<comment type="similarity">
    <text evidence="1">Belongs to the OMP decarboxylase family. Type 1 subfamily.</text>
</comment>
<organism>
    <name type="scientific">Brucella abortus (strain 2308)</name>
    <dbReference type="NCBI Taxonomy" id="359391"/>
    <lineage>
        <taxon>Bacteria</taxon>
        <taxon>Pseudomonadati</taxon>
        <taxon>Pseudomonadota</taxon>
        <taxon>Alphaproteobacteria</taxon>
        <taxon>Hyphomicrobiales</taxon>
        <taxon>Brucellaceae</taxon>
        <taxon>Brucella/Ochrobactrum group</taxon>
        <taxon>Brucella</taxon>
    </lineage>
</organism>